<proteinExistence type="inferred from homology"/>
<evidence type="ECO:0000250" key="1"/>
<evidence type="ECO:0000255" key="2"/>
<evidence type="ECO:0000256" key="3">
    <source>
        <dbReference type="SAM" id="MobiDB-lite"/>
    </source>
</evidence>
<evidence type="ECO:0000305" key="4"/>
<reference key="1">
    <citation type="journal article" date="2009" name="Nature">
        <title>Evolution of pathogenicity and sexual reproduction in eight Candida genomes.</title>
        <authorList>
            <person name="Butler G."/>
            <person name="Rasmussen M.D."/>
            <person name="Lin M.F."/>
            <person name="Santos M.A.S."/>
            <person name="Sakthikumar S."/>
            <person name="Munro C.A."/>
            <person name="Rheinbay E."/>
            <person name="Grabherr M."/>
            <person name="Forche A."/>
            <person name="Reedy J.L."/>
            <person name="Agrafioti I."/>
            <person name="Arnaud M.B."/>
            <person name="Bates S."/>
            <person name="Brown A.J.P."/>
            <person name="Brunke S."/>
            <person name="Costanzo M.C."/>
            <person name="Fitzpatrick D.A."/>
            <person name="de Groot P.W.J."/>
            <person name="Harris D."/>
            <person name="Hoyer L.L."/>
            <person name="Hube B."/>
            <person name="Klis F.M."/>
            <person name="Kodira C."/>
            <person name="Lennard N."/>
            <person name="Logue M.E."/>
            <person name="Martin R."/>
            <person name="Neiman A.M."/>
            <person name="Nikolaou E."/>
            <person name="Quail M.A."/>
            <person name="Quinn J."/>
            <person name="Santos M.C."/>
            <person name="Schmitzberger F.F."/>
            <person name="Sherlock G."/>
            <person name="Shah P."/>
            <person name="Silverstein K.A.T."/>
            <person name="Skrzypek M.S."/>
            <person name="Soll D."/>
            <person name="Staggs R."/>
            <person name="Stansfield I."/>
            <person name="Stumpf M.P.H."/>
            <person name="Sudbery P.E."/>
            <person name="Srikantha T."/>
            <person name="Zeng Q."/>
            <person name="Berman J."/>
            <person name="Berriman M."/>
            <person name="Heitman J."/>
            <person name="Gow N.A.R."/>
            <person name="Lorenz M.C."/>
            <person name="Birren B.W."/>
            <person name="Kellis M."/>
            <person name="Cuomo C.A."/>
        </authorList>
    </citation>
    <scope>NUCLEOTIDE SEQUENCE [LARGE SCALE GENOMIC DNA]</scope>
    <source>
        <strain>ATCC 11503 / BCRC 21390 / CBS 2605 / JCM 1781 / NBRC 1676 / NRRL YB-4239</strain>
    </source>
</reference>
<gene>
    <name type="primary">SHE9</name>
    <name type="ORF">LELG_01297</name>
</gene>
<dbReference type="EMBL" id="CH981524">
    <property type="protein sequence ID" value="EDK43119.1"/>
    <property type="molecule type" value="Genomic_DNA"/>
</dbReference>
<dbReference type="RefSeq" id="XP_001528777.1">
    <property type="nucleotide sequence ID" value="XM_001528727.1"/>
</dbReference>
<dbReference type="SMR" id="A5DVB1"/>
<dbReference type="STRING" id="379508.A5DVB1"/>
<dbReference type="GeneID" id="5235702"/>
<dbReference type="KEGG" id="lel:PVL30_001268"/>
<dbReference type="eggNOG" id="ENOG502QQ1E">
    <property type="taxonomic scope" value="Eukaryota"/>
</dbReference>
<dbReference type="HOGENOM" id="CLU_025632_5_0_1"/>
<dbReference type="InParanoid" id="A5DVB1"/>
<dbReference type="OMA" id="YRNDHEN"/>
<dbReference type="OrthoDB" id="5595506at2759"/>
<dbReference type="Proteomes" id="UP000001996">
    <property type="component" value="Unassembled WGS sequence"/>
</dbReference>
<dbReference type="GO" id="GO:0005743">
    <property type="term" value="C:mitochondrial inner membrane"/>
    <property type="evidence" value="ECO:0007669"/>
    <property type="project" value="UniProtKB-SubCell"/>
</dbReference>
<dbReference type="GO" id="GO:0007007">
    <property type="term" value="P:inner mitochondrial membrane organization"/>
    <property type="evidence" value="ECO:0007669"/>
    <property type="project" value="TreeGrafter"/>
</dbReference>
<dbReference type="InterPro" id="IPR008839">
    <property type="entry name" value="MDM33_fungi"/>
</dbReference>
<dbReference type="PANTHER" id="PTHR31961">
    <property type="entry name" value="SENSITIVE TO HIGH EXPRESSION PROTEIN 9, MITOCHONDRIAL"/>
    <property type="match status" value="1"/>
</dbReference>
<dbReference type="PANTHER" id="PTHR31961:SF3">
    <property type="entry name" value="SENSITIVE TO HIGH EXPRESSION PROTEIN 9, MITOCHONDRIAL"/>
    <property type="match status" value="1"/>
</dbReference>
<dbReference type="Pfam" id="PF05546">
    <property type="entry name" value="She9_MDM33"/>
    <property type="match status" value="1"/>
</dbReference>
<protein>
    <recommendedName>
        <fullName>Sensitive to high expression protein 9 homolog, mitochondrial</fullName>
    </recommendedName>
</protein>
<name>SHE9_LODEL</name>
<organism>
    <name type="scientific">Lodderomyces elongisporus (strain ATCC 11503 / CBS 2605 / JCM 1781 / NBRC 1676 / NRRL YB-4239)</name>
    <name type="common">Yeast</name>
    <name type="synonym">Saccharomyces elongisporus</name>
    <dbReference type="NCBI Taxonomy" id="379508"/>
    <lineage>
        <taxon>Eukaryota</taxon>
        <taxon>Fungi</taxon>
        <taxon>Dikarya</taxon>
        <taxon>Ascomycota</taxon>
        <taxon>Saccharomycotina</taxon>
        <taxon>Pichiomycetes</taxon>
        <taxon>Debaryomycetaceae</taxon>
        <taxon>Candida/Lodderomyces clade</taxon>
        <taxon>Lodderomyces</taxon>
    </lineage>
</organism>
<comment type="function">
    <text evidence="1">Required for the maintenance of the structure of the mitochondrial inner membrane. Involved in mitochondrial morphology. Causes growth arrest when highly overexpressed (By similarity).</text>
</comment>
<comment type="subunit">
    <text evidence="1">Homooligomer.</text>
</comment>
<comment type="subcellular location">
    <subcellularLocation>
        <location evidence="1">Mitochondrion inner membrane</location>
        <topology evidence="1">Multi-pass membrane protein</topology>
    </subcellularLocation>
</comment>
<comment type="similarity">
    <text evidence="4">Belongs to the SHE9 family.</text>
</comment>
<sequence length="508" mass="58174">MLLPVLRASSRIVMRHSVVFNCIRLQSNKPERSQQINELKLREIIEGTNFGTEATKKRKLEEERKKLEKEREAERQREEKKEREAKLEEANKQNEADFSSTKTGKLKGEDSEVDHKKDEGLRIENKIIATTDSSVDATDIPNIAEEVNETIQKEIGGLPSEKQKKQSALTKKITQYLDSAHDTILTVTRALNDVTGYSAIERLKKSIEEQEEDLKNAKKYVKECKLTYGDAIQKRSHSQREVNELLTRKHNWSPEDLERFTELYRNDHENDVWEKECEKKLEEAELKVDAVQLKLTQLILTRYHEEQIWSDKIRRSSTWGTWVLMGLNVLLFVFATFLVEPWKRKKLVLGFEDKVKTVLVGIAQENDAVLNPIIEKLDQEQKDGSTGHNLEKSGYLTLEDEGGQTTSLPASLDSTSSQPPSAPVLSKEQQGSRILRAKASIKFFILQAQYAIVSSWHRVRVTCVKSYTALTTPSIEFLKLDKVEFGLYTFIISILSCGLGSLATIYCR</sequence>
<feature type="transit peptide" description="Mitochondrion" evidence="2">
    <location>
        <begin position="1"/>
        <end status="unknown"/>
    </location>
</feature>
<feature type="chain" id="PRO_0000351059" description="Sensitive to high expression protein 9 homolog, mitochondrial">
    <location>
        <begin status="unknown"/>
        <end position="508"/>
    </location>
</feature>
<feature type="topological domain" description="Mitochondrial matrix" evidence="2">
    <location>
        <begin status="unknown"/>
        <end position="318"/>
    </location>
</feature>
<feature type="transmembrane region" description="Helical" evidence="2">
    <location>
        <begin position="319"/>
        <end position="339"/>
    </location>
</feature>
<feature type="topological domain" description="Mitochondrial intermembrane" evidence="2">
    <location>
        <begin position="340"/>
        <end position="484"/>
    </location>
</feature>
<feature type="transmembrane region" description="Helical" evidence="2">
    <location>
        <begin position="485"/>
        <end position="505"/>
    </location>
</feature>
<feature type="topological domain" description="Mitochondrial matrix" evidence="2">
    <location>
        <begin position="506"/>
        <end position="508"/>
    </location>
</feature>
<feature type="region of interest" description="Disordered" evidence="3">
    <location>
        <begin position="54"/>
        <end position="118"/>
    </location>
</feature>
<feature type="region of interest" description="Disordered" evidence="3">
    <location>
        <begin position="400"/>
        <end position="429"/>
    </location>
</feature>
<feature type="coiled-coil region" evidence="2">
    <location>
        <begin position="49"/>
        <end position="98"/>
    </location>
</feature>
<feature type="coiled-coil region" evidence="2">
    <location>
        <begin position="196"/>
        <end position="228"/>
    </location>
</feature>
<feature type="coiled-coil region" evidence="2">
    <location>
        <begin position="266"/>
        <end position="301"/>
    </location>
</feature>
<feature type="compositionally biased region" description="Basic and acidic residues" evidence="3">
    <location>
        <begin position="59"/>
        <end position="95"/>
    </location>
</feature>
<feature type="compositionally biased region" description="Basic and acidic residues" evidence="3">
    <location>
        <begin position="106"/>
        <end position="118"/>
    </location>
</feature>
<feature type="compositionally biased region" description="Polar residues" evidence="3">
    <location>
        <begin position="403"/>
        <end position="419"/>
    </location>
</feature>
<accession>A5DVB1</accession>
<keyword id="KW-0175">Coiled coil</keyword>
<keyword id="KW-0472">Membrane</keyword>
<keyword id="KW-0496">Mitochondrion</keyword>
<keyword id="KW-0999">Mitochondrion inner membrane</keyword>
<keyword id="KW-1185">Reference proteome</keyword>
<keyword id="KW-0809">Transit peptide</keyword>
<keyword id="KW-0812">Transmembrane</keyword>
<keyword id="KW-1133">Transmembrane helix</keyword>